<proteinExistence type="inferred from homology"/>
<name>EFEO_SHIF8</name>
<accession>Q0T617</accession>
<evidence type="ECO:0000250" key="1"/>
<evidence type="ECO:0000255" key="2"/>
<evidence type="ECO:0000305" key="3"/>
<comment type="function">
    <text evidence="1">Involved in Fe(2+) uptake. Could be an iron-binding and/or electron-transfer component (By similarity).</text>
</comment>
<comment type="subunit">
    <text evidence="1">Monomer. Part of a ferrous iron transporter composed of EfeU, EfeO and EfeB (By similarity).</text>
</comment>
<comment type="subcellular location">
    <subcellularLocation>
        <location evidence="1">Periplasm</location>
    </subcellularLocation>
</comment>
<comment type="similarity">
    <text evidence="3">Belongs to the EfeM/EfeO family.</text>
</comment>
<feature type="signal peptide" evidence="2">
    <location>
        <begin position="1"/>
        <end position="26"/>
    </location>
</feature>
<feature type="chain" id="PRO_0000278559" description="Iron uptake system component EfeO">
    <location>
        <begin position="27"/>
        <end position="375"/>
    </location>
</feature>
<keyword id="KW-0574">Periplasm</keyword>
<keyword id="KW-0732">Signal</keyword>
<sequence length="375" mass="41138">MTINFRRNALQLSVAALFSSAFMANAADVPQVKVTVTDKQCEPMTITVNAGKTQFIIQNHSQKALEWEILKGVMVVEERENIAPGFSQKMTANLQPGEYDMTCGLLTNPKGKLIVKGEATADAAQSDALLSLGGAITAYKAYVMAETTQLVTDTKAFTDAIKAGDIEKAKALYAPTRQHYERIEPIAELFSDLDGSIDAREDDYEQKAADPKFTGFHRLEKALFGDNTTKGMDQYAEQLYTDVVDLQKRISELAFPPSKVVGGAAGLIEEVAASKISGEEDRYSHTDLWDFQANVEGSQKIVDLLRPQLQKANPELLAKVDANFKKVDTILAKYRTKDGFETYDKLTDADRNALKGPITALAEDLAQLRGVLGLD</sequence>
<reference key="1">
    <citation type="journal article" date="2006" name="BMC Genomics">
        <title>Complete genome sequence of Shigella flexneri 5b and comparison with Shigella flexneri 2a.</title>
        <authorList>
            <person name="Nie H."/>
            <person name="Yang F."/>
            <person name="Zhang X."/>
            <person name="Yang J."/>
            <person name="Chen L."/>
            <person name="Wang J."/>
            <person name="Xiong Z."/>
            <person name="Peng J."/>
            <person name="Sun L."/>
            <person name="Dong J."/>
            <person name="Xue Y."/>
            <person name="Xu X."/>
            <person name="Chen S."/>
            <person name="Yao Z."/>
            <person name="Shen Y."/>
            <person name="Jin Q."/>
        </authorList>
    </citation>
    <scope>NUCLEOTIDE SEQUENCE [LARGE SCALE GENOMIC DNA]</scope>
    <source>
        <strain>8401</strain>
    </source>
</reference>
<organism>
    <name type="scientific">Shigella flexneri serotype 5b (strain 8401)</name>
    <dbReference type="NCBI Taxonomy" id="373384"/>
    <lineage>
        <taxon>Bacteria</taxon>
        <taxon>Pseudomonadati</taxon>
        <taxon>Pseudomonadota</taxon>
        <taxon>Gammaproteobacteria</taxon>
        <taxon>Enterobacterales</taxon>
        <taxon>Enterobacteriaceae</taxon>
        <taxon>Shigella</taxon>
    </lineage>
</organism>
<dbReference type="EMBL" id="CP000266">
    <property type="protein sequence ID" value="ABF03248.1"/>
    <property type="molecule type" value="Genomic_DNA"/>
</dbReference>
<dbReference type="RefSeq" id="WP_000154398.1">
    <property type="nucleotide sequence ID" value="NC_008258.1"/>
</dbReference>
<dbReference type="SMR" id="Q0T617"/>
<dbReference type="GeneID" id="93776391"/>
<dbReference type="KEGG" id="sfv:SFV_1029"/>
<dbReference type="HOGENOM" id="CLU_050342_2_1_6"/>
<dbReference type="Proteomes" id="UP000000659">
    <property type="component" value="Chromosome"/>
</dbReference>
<dbReference type="GO" id="GO:0042597">
    <property type="term" value="C:periplasmic space"/>
    <property type="evidence" value="ECO:0007669"/>
    <property type="project" value="UniProtKB-SubCell"/>
</dbReference>
<dbReference type="CDD" id="cd14656">
    <property type="entry name" value="Imelysin-like_EfeO"/>
    <property type="match status" value="1"/>
</dbReference>
<dbReference type="FunFam" id="1.20.1420.20:FF:000001">
    <property type="entry name" value="Iron uptake system component EfeO"/>
    <property type="match status" value="1"/>
</dbReference>
<dbReference type="FunFam" id="2.60.40.420:FF:000052">
    <property type="entry name" value="Iron uptake system component EfeO"/>
    <property type="match status" value="1"/>
</dbReference>
<dbReference type="Gene3D" id="2.60.40.420">
    <property type="entry name" value="Cupredoxins - blue copper proteins"/>
    <property type="match status" value="1"/>
</dbReference>
<dbReference type="Gene3D" id="1.20.1420.20">
    <property type="entry name" value="M75 peptidase, HXXE motif"/>
    <property type="match status" value="1"/>
</dbReference>
<dbReference type="InterPro" id="IPR008972">
    <property type="entry name" value="Cupredoxin"/>
</dbReference>
<dbReference type="InterPro" id="IPR050894">
    <property type="entry name" value="EfeM/EfeO_iron_uptake"/>
</dbReference>
<dbReference type="InterPro" id="IPR028096">
    <property type="entry name" value="EfeO_Cupredoxin"/>
</dbReference>
<dbReference type="InterPro" id="IPR018976">
    <property type="entry name" value="Imelysin-like"/>
</dbReference>
<dbReference type="InterPro" id="IPR034981">
    <property type="entry name" value="Imelysin-like_EfeO/Algp7"/>
</dbReference>
<dbReference type="InterPro" id="IPR038352">
    <property type="entry name" value="Imelysin_sf"/>
</dbReference>
<dbReference type="InterPro" id="IPR053377">
    <property type="entry name" value="Iron_uptake_EfeM/EfeO"/>
</dbReference>
<dbReference type="NCBIfam" id="NF041757">
    <property type="entry name" value="EfeO"/>
    <property type="match status" value="1"/>
</dbReference>
<dbReference type="NCBIfam" id="NF007697">
    <property type="entry name" value="PRK10378.1"/>
    <property type="match status" value="1"/>
</dbReference>
<dbReference type="PANTHER" id="PTHR39192">
    <property type="entry name" value="IRON UPTAKE SYSTEM COMPONENT EFEO"/>
    <property type="match status" value="1"/>
</dbReference>
<dbReference type="PANTHER" id="PTHR39192:SF1">
    <property type="entry name" value="IRON UPTAKE SYSTEM COMPONENT EFEO"/>
    <property type="match status" value="1"/>
</dbReference>
<dbReference type="Pfam" id="PF13473">
    <property type="entry name" value="Cupredoxin_1"/>
    <property type="match status" value="1"/>
</dbReference>
<dbReference type="Pfam" id="PF09375">
    <property type="entry name" value="Peptidase_M75"/>
    <property type="match status" value="1"/>
</dbReference>
<dbReference type="SUPFAM" id="SSF49503">
    <property type="entry name" value="Cupredoxins"/>
    <property type="match status" value="1"/>
</dbReference>
<protein>
    <recommendedName>
        <fullName>Iron uptake system component EfeO</fullName>
    </recommendedName>
</protein>
<gene>
    <name type="primary">efeO</name>
    <name type="ordered locus">SFV_1029</name>
</gene>